<sequence>MVAAKKQKKTIESINSRLALVMKSGKYCLGYKQTLKTLRQGKAKLVIIAKNAPPLRKSEIEYYALLAKTGVHHYSGNNIELGTACGKYYRVCTLAITDPGDSDIITTLPESQV</sequence>
<protein>
    <recommendedName>
        <fullName evidence="1">Large ribosomal subunit protein eL30</fullName>
    </recommendedName>
    <alternativeName>
        <fullName>60S ribosomal protein L30</fullName>
    </alternativeName>
</protein>
<name>RL30_SPOFR</name>
<evidence type="ECO:0000305" key="1"/>
<reference key="1">
    <citation type="journal article" date="2003" name="Bioinformatics">
        <title>Annotation pattern of ESTs from Spodoptera frugiperda Sf9 cells and analysis of the ribosomal protein genes reveal insect-specific features and unexpectedly low codon usage bias.</title>
        <authorList>
            <person name="Landais I."/>
            <person name="Ogliastro M."/>
            <person name="Mita K."/>
            <person name="Nohata J."/>
            <person name="Lopez-Ferber M."/>
            <person name="Duonor-Cerutti M."/>
            <person name="Shimada T."/>
            <person name="Fournier P."/>
            <person name="Devauchelle G."/>
        </authorList>
    </citation>
    <scope>NUCLEOTIDE SEQUENCE [LARGE SCALE MRNA]</scope>
</reference>
<accession>P58375</accession>
<gene>
    <name type="primary">RpL30</name>
</gene>
<keyword id="KW-0687">Ribonucleoprotein</keyword>
<keyword id="KW-0689">Ribosomal protein</keyword>
<organism>
    <name type="scientific">Spodoptera frugiperda</name>
    <name type="common">Fall armyworm</name>
    <dbReference type="NCBI Taxonomy" id="7108"/>
    <lineage>
        <taxon>Eukaryota</taxon>
        <taxon>Metazoa</taxon>
        <taxon>Ecdysozoa</taxon>
        <taxon>Arthropoda</taxon>
        <taxon>Hexapoda</taxon>
        <taxon>Insecta</taxon>
        <taxon>Pterygota</taxon>
        <taxon>Neoptera</taxon>
        <taxon>Endopterygota</taxon>
        <taxon>Lepidoptera</taxon>
        <taxon>Glossata</taxon>
        <taxon>Ditrysia</taxon>
        <taxon>Noctuoidea</taxon>
        <taxon>Noctuidae</taxon>
        <taxon>Amphipyrinae</taxon>
        <taxon>Spodoptera</taxon>
    </lineage>
</organism>
<proteinExistence type="inferred from homology"/>
<dbReference type="EMBL" id="AF400193">
    <property type="protein sequence ID" value="AAK92165.1"/>
    <property type="molecule type" value="mRNA"/>
</dbReference>
<dbReference type="SMR" id="P58375"/>
<dbReference type="EnsemblMetazoa" id="XM_035573945.2">
    <property type="protein sequence ID" value="XP_035429838.1"/>
    <property type="gene ID" value="LOC118262517"/>
</dbReference>
<dbReference type="OrthoDB" id="1928736at2759"/>
<dbReference type="Proteomes" id="UP000829999">
    <property type="component" value="Unplaced"/>
</dbReference>
<dbReference type="GO" id="GO:0022625">
    <property type="term" value="C:cytosolic large ribosomal subunit"/>
    <property type="evidence" value="ECO:0007669"/>
    <property type="project" value="InterPro"/>
</dbReference>
<dbReference type="GO" id="GO:0003723">
    <property type="term" value="F:RNA binding"/>
    <property type="evidence" value="ECO:0007669"/>
    <property type="project" value="InterPro"/>
</dbReference>
<dbReference type="GO" id="GO:0003735">
    <property type="term" value="F:structural constituent of ribosome"/>
    <property type="evidence" value="ECO:0007669"/>
    <property type="project" value="InterPro"/>
</dbReference>
<dbReference type="FunFam" id="3.30.1330.30:FF:000001">
    <property type="entry name" value="60S ribosomal protein L30"/>
    <property type="match status" value="1"/>
</dbReference>
<dbReference type="Gene3D" id="3.30.1330.30">
    <property type="match status" value="1"/>
</dbReference>
<dbReference type="HAMAP" id="MF_00481">
    <property type="entry name" value="Ribosomal_eL30"/>
    <property type="match status" value="1"/>
</dbReference>
<dbReference type="InterPro" id="IPR000231">
    <property type="entry name" value="Ribosomal_eL30"/>
</dbReference>
<dbReference type="InterPro" id="IPR039109">
    <property type="entry name" value="Ribosomal_eL30-like"/>
</dbReference>
<dbReference type="InterPro" id="IPR029064">
    <property type="entry name" value="Ribosomal_eL30-like_sf"/>
</dbReference>
<dbReference type="InterPro" id="IPR022991">
    <property type="entry name" value="Ribosomal_eL30_CS"/>
</dbReference>
<dbReference type="InterPro" id="IPR004038">
    <property type="entry name" value="Ribosomal_eL8/eL30/eS12/Gad45"/>
</dbReference>
<dbReference type="NCBIfam" id="NF002172">
    <property type="entry name" value="PRK01018.1"/>
    <property type="match status" value="1"/>
</dbReference>
<dbReference type="PANTHER" id="PTHR11449">
    <property type="entry name" value="RIBOSOMAL PROTEIN L30"/>
    <property type="match status" value="1"/>
</dbReference>
<dbReference type="Pfam" id="PF01248">
    <property type="entry name" value="Ribosomal_L7Ae"/>
    <property type="match status" value="1"/>
</dbReference>
<dbReference type="SUPFAM" id="SSF55315">
    <property type="entry name" value="L30e-like"/>
    <property type="match status" value="1"/>
</dbReference>
<dbReference type="PROSITE" id="PS00709">
    <property type="entry name" value="RIBOSOMAL_L30E_1"/>
    <property type="match status" value="1"/>
</dbReference>
<dbReference type="PROSITE" id="PS00993">
    <property type="entry name" value="RIBOSOMAL_L30E_2"/>
    <property type="match status" value="1"/>
</dbReference>
<feature type="chain" id="PRO_0000146130" description="Large ribosomal subunit protein eL30">
    <location>
        <begin position="1"/>
        <end position="113"/>
    </location>
</feature>
<comment type="similarity">
    <text evidence="1">Belongs to the eukaryotic ribosomal protein eL30 family.</text>
</comment>